<organism>
    <name type="scientific">Bacillus cereus (strain 03BB102)</name>
    <dbReference type="NCBI Taxonomy" id="572264"/>
    <lineage>
        <taxon>Bacteria</taxon>
        <taxon>Bacillati</taxon>
        <taxon>Bacillota</taxon>
        <taxon>Bacilli</taxon>
        <taxon>Bacillales</taxon>
        <taxon>Bacillaceae</taxon>
        <taxon>Bacillus</taxon>
        <taxon>Bacillus cereus group</taxon>
    </lineage>
</organism>
<proteinExistence type="inferred from homology"/>
<sequence>MAELEFEKPVVELRNKIRELKDYTKNSQMDFSEEIRILEDKLENLEEDIYGNMKVWDRVQIARHAERPTTLDYIEHLFTDFFECHGDRLFGDDAAIVGGIAKYKGMPVTVIGHQRGKDTKENIRRNFGMPHPEGYRKALRLMKQAEKFNRPIICFIDTKGAYPGKAAEERGQSEAIARNLFEMAGLTVPVICIVIGEGGSGGALGLGVGDYIHMLENSTYSVITPEGAAAILWKDAGKAKEAAEAMRITAADLKELGVIDEIIPEAKGGAHRNVLKQSENIDLMLRKTFEQLNGISKDELIEKRYEKYMKIGQVSFSNASIWIK</sequence>
<comment type="function">
    <text evidence="1">Component of the acetyl coenzyme A carboxylase (ACC) complex. First, biotin carboxylase catalyzes the carboxylation of biotin on its carrier protein (BCCP) and then the CO(2) group is transferred by the carboxyltransferase to acetyl-CoA to form malonyl-CoA.</text>
</comment>
<comment type="catalytic activity">
    <reaction evidence="1">
        <text>N(6)-carboxybiotinyl-L-lysyl-[protein] + acetyl-CoA = N(6)-biotinyl-L-lysyl-[protein] + malonyl-CoA</text>
        <dbReference type="Rhea" id="RHEA:54728"/>
        <dbReference type="Rhea" id="RHEA-COMP:10505"/>
        <dbReference type="Rhea" id="RHEA-COMP:10506"/>
        <dbReference type="ChEBI" id="CHEBI:57288"/>
        <dbReference type="ChEBI" id="CHEBI:57384"/>
        <dbReference type="ChEBI" id="CHEBI:83144"/>
        <dbReference type="ChEBI" id="CHEBI:83145"/>
        <dbReference type="EC" id="2.1.3.15"/>
    </reaction>
</comment>
<comment type="pathway">
    <text evidence="1">Lipid metabolism; malonyl-CoA biosynthesis; malonyl-CoA from acetyl-CoA: step 1/1.</text>
</comment>
<comment type="subunit">
    <text evidence="1">Acetyl-CoA carboxylase is a heterohexamer composed of biotin carboxyl carrier protein (AccB), biotin carboxylase (AccC) and two subunits each of ACCase subunit alpha (AccA) and ACCase subunit beta (AccD).</text>
</comment>
<comment type="subcellular location">
    <subcellularLocation>
        <location evidence="1">Cytoplasm</location>
    </subcellularLocation>
</comment>
<comment type="similarity">
    <text evidence="1">Belongs to the AccA family.</text>
</comment>
<dbReference type="EC" id="2.1.3.15" evidence="1"/>
<dbReference type="EMBL" id="CP001407">
    <property type="protein sequence ID" value="ACO27116.1"/>
    <property type="molecule type" value="Genomic_DNA"/>
</dbReference>
<dbReference type="RefSeq" id="WP_000818794.1">
    <property type="nucleotide sequence ID" value="NZ_CP009318.1"/>
</dbReference>
<dbReference type="SMR" id="C1EUU4"/>
<dbReference type="GeneID" id="75087757"/>
<dbReference type="KEGG" id="bcx:BCA_4710"/>
<dbReference type="PATRIC" id="fig|572264.18.peg.4659"/>
<dbReference type="UniPathway" id="UPA00655">
    <property type="reaction ID" value="UER00711"/>
</dbReference>
<dbReference type="Proteomes" id="UP000002210">
    <property type="component" value="Chromosome"/>
</dbReference>
<dbReference type="GO" id="GO:0009317">
    <property type="term" value="C:acetyl-CoA carboxylase complex"/>
    <property type="evidence" value="ECO:0007669"/>
    <property type="project" value="InterPro"/>
</dbReference>
<dbReference type="GO" id="GO:0003989">
    <property type="term" value="F:acetyl-CoA carboxylase activity"/>
    <property type="evidence" value="ECO:0007669"/>
    <property type="project" value="InterPro"/>
</dbReference>
<dbReference type="GO" id="GO:0005524">
    <property type="term" value="F:ATP binding"/>
    <property type="evidence" value="ECO:0007669"/>
    <property type="project" value="UniProtKB-KW"/>
</dbReference>
<dbReference type="GO" id="GO:0016743">
    <property type="term" value="F:carboxyl- or carbamoyltransferase activity"/>
    <property type="evidence" value="ECO:0007669"/>
    <property type="project" value="UniProtKB-UniRule"/>
</dbReference>
<dbReference type="GO" id="GO:0006633">
    <property type="term" value="P:fatty acid biosynthetic process"/>
    <property type="evidence" value="ECO:0007669"/>
    <property type="project" value="UniProtKB-KW"/>
</dbReference>
<dbReference type="GO" id="GO:2001295">
    <property type="term" value="P:malonyl-CoA biosynthetic process"/>
    <property type="evidence" value="ECO:0007669"/>
    <property type="project" value="UniProtKB-UniRule"/>
</dbReference>
<dbReference type="Gene3D" id="3.90.226.10">
    <property type="entry name" value="2-enoyl-CoA Hydratase, Chain A, domain 1"/>
    <property type="match status" value="1"/>
</dbReference>
<dbReference type="HAMAP" id="MF_00823">
    <property type="entry name" value="AcetylCoA_CT_alpha"/>
    <property type="match status" value="1"/>
</dbReference>
<dbReference type="InterPro" id="IPR001095">
    <property type="entry name" value="Acetyl_CoA_COase_a_su"/>
</dbReference>
<dbReference type="InterPro" id="IPR029045">
    <property type="entry name" value="ClpP/crotonase-like_dom_sf"/>
</dbReference>
<dbReference type="InterPro" id="IPR011763">
    <property type="entry name" value="COA_CT_C"/>
</dbReference>
<dbReference type="NCBIfam" id="TIGR00513">
    <property type="entry name" value="accA"/>
    <property type="match status" value="1"/>
</dbReference>
<dbReference type="NCBIfam" id="NF041504">
    <property type="entry name" value="AccA_sub"/>
    <property type="match status" value="1"/>
</dbReference>
<dbReference type="NCBIfam" id="NF004344">
    <property type="entry name" value="PRK05724.1"/>
    <property type="match status" value="1"/>
</dbReference>
<dbReference type="PANTHER" id="PTHR42853">
    <property type="entry name" value="ACETYL-COENZYME A CARBOXYLASE CARBOXYL TRANSFERASE SUBUNIT ALPHA"/>
    <property type="match status" value="1"/>
</dbReference>
<dbReference type="PANTHER" id="PTHR42853:SF3">
    <property type="entry name" value="ACETYL-COENZYME A CARBOXYLASE CARBOXYL TRANSFERASE SUBUNIT ALPHA, CHLOROPLASTIC"/>
    <property type="match status" value="1"/>
</dbReference>
<dbReference type="Pfam" id="PF03255">
    <property type="entry name" value="ACCA"/>
    <property type="match status" value="1"/>
</dbReference>
<dbReference type="PRINTS" id="PR01069">
    <property type="entry name" value="ACCCTRFRASEA"/>
</dbReference>
<dbReference type="SUPFAM" id="SSF52096">
    <property type="entry name" value="ClpP/crotonase"/>
    <property type="match status" value="1"/>
</dbReference>
<dbReference type="PROSITE" id="PS50989">
    <property type="entry name" value="COA_CT_CTER"/>
    <property type="match status" value="1"/>
</dbReference>
<gene>
    <name evidence="1" type="primary">accA</name>
    <name type="ordered locus">BCA_4710</name>
</gene>
<reference key="1">
    <citation type="submission" date="2009-02" db="EMBL/GenBank/DDBJ databases">
        <title>Genome sequence of Bacillus cereus 03BB102.</title>
        <authorList>
            <person name="Dodson R.J."/>
            <person name="Jackson P."/>
            <person name="Munk A.C."/>
            <person name="Brettin T."/>
            <person name="Bruce D."/>
            <person name="Detter C."/>
            <person name="Tapia R."/>
            <person name="Han C."/>
            <person name="Sutton G."/>
            <person name="Sims D."/>
        </authorList>
    </citation>
    <scope>NUCLEOTIDE SEQUENCE [LARGE SCALE GENOMIC DNA]</scope>
    <source>
        <strain>03BB102</strain>
    </source>
</reference>
<evidence type="ECO:0000255" key="1">
    <source>
        <dbReference type="HAMAP-Rule" id="MF_00823"/>
    </source>
</evidence>
<evidence type="ECO:0000255" key="2">
    <source>
        <dbReference type="PROSITE-ProRule" id="PRU01137"/>
    </source>
</evidence>
<protein>
    <recommendedName>
        <fullName evidence="1">Acetyl-coenzyme A carboxylase carboxyl transferase subunit alpha</fullName>
        <shortName evidence="1">ACCase subunit alpha</shortName>
        <shortName evidence="1">Acetyl-CoA carboxylase carboxyltransferase subunit alpha</shortName>
        <ecNumber evidence="1">2.1.3.15</ecNumber>
    </recommendedName>
</protein>
<accession>C1EUU4</accession>
<feature type="chain" id="PRO_1000148732" description="Acetyl-coenzyme A carboxylase carboxyl transferase subunit alpha">
    <location>
        <begin position="1"/>
        <end position="324"/>
    </location>
</feature>
<feature type="domain" description="CoA carboxyltransferase C-terminal" evidence="2">
    <location>
        <begin position="37"/>
        <end position="291"/>
    </location>
</feature>
<name>ACCA_BACC3</name>
<keyword id="KW-0067">ATP-binding</keyword>
<keyword id="KW-0963">Cytoplasm</keyword>
<keyword id="KW-0275">Fatty acid biosynthesis</keyword>
<keyword id="KW-0276">Fatty acid metabolism</keyword>
<keyword id="KW-0444">Lipid biosynthesis</keyword>
<keyword id="KW-0443">Lipid metabolism</keyword>
<keyword id="KW-0547">Nucleotide-binding</keyword>
<keyword id="KW-0808">Transferase</keyword>